<reference key="1">
    <citation type="journal article" date="2004" name="J. Infect. Dis.">
        <title>Progress toward characterization of the group A Streptococcus metagenome: complete genome sequence of a macrolide-resistant serotype M6 strain.</title>
        <authorList>
            <person name="Banks D.J."/>
            <person name="Porcella S.F."/>
            <person name="Barbian K.D."/>
            <person name="Beres S.B."/>
            <person name="Philips L.E."/>
            <person name="Voyich J.M."/>
            <person name="DeLeo F.R."/>
            <person name="Martin J.M."/>
            <person name="Somerville G.A."/>
            <person name="Musser J.M."/>
        </authorList>
    </citation>
    <scope>NUCLEOTIDE SEQUENCE [LARGE SCALE GENOMIC DNA]</scope>
    <source>
        <strain>ATCC BAA-946 / MGAS10394</strain>
    </source>
</reference>
<dbReference type="EC" id="6.3.1.1" evidence="1"/>
<dbReference type="EMBL" id="CP000003">
    <property type="protein sequence ID" value="AAT87425.1"/>
    <property type="molecule type" value="Genomic_DNA"/>
</dbReference>
<dbReference type="RefSeq" id="WP_011184764.1">
    <property type="nucleotide sequence ID" value="NC_006086.1"/>
</dbReference>
<dbReference type="SMR" id="Q5XAY8"/>
<dbReference type="KEGG" id="spa:M6_Spy1290"/>
<dbReference type="HOGENOM" id="CLU_071543_0_0_9"/>
<dbReference type="UniPathway" id="UPA00134">
    <property type="reaction ID" value="UER00194"/>
</dbReference>
<dbReference type="Proteomes" id="UP000001167">
    <property type="component" value="Chromosome"/>
</dbReference>
<dbReference type="GO" id="GO:0005829">
    <property type="term" value="C:cytosol"/>
    <property type="evidence" value="ECO:0007669"/>
    <property type="project" value="TreeGrafter"/>
</dbReference>
<dbReference type="GO" id="GO:0004071">
    <property type="term" value="F:aspartate-ammonia ligase activity"/>
    <property type="evidence" value="ECO:0007669"/>
    <property type="project" value="UniProtKB-UniRule"/>
</dbReference>
<dbReference type="GO" id="GO:0005524">
    <property type="term" value="F:ATP binding"/>
    <property type="evidence" value="ECO:0007669"/>
    <property type="project" value="UniProtKB-UniRule"/>
</dbReference>
<dbReference type="GO" id="GO:0140096">
    <property type="term" value="F:catalytic activity, acting on a protein"/>
    <property type="evidence" value="ECO:0007669"/>
    <property type="project" value="UniProtKB-ARBA"/>
</dbReference>
<dbReference type="GO" id="GO:0016740">
    <property type="term" value="F:transferase activity"/>
    <property type="evidence" value="ECO:0007669"/>
    <property type="project" value="UniProtKB-ARBA"/>
</dbReference>
<dbReference type="GO" id="GO:0070981">
    <property type="term" value="P:L-asparagine biosynthetic process"/>
    <property type="evidence" value="ECO:0007669"/>
    <property type="project" value="UniProtKB-UniRule"/>
</dbReference>
<dbReference type="CDD" id="cd00645">
    <property type="entry name" value="AsnA"/>
    <property type="match status" value="1"/>
</dbReference>
<dbReference type="Gene3D" id="3.30.930.10">
    <property type="entry name" value="Bira Bifunctional Protein, Domain 2"/>
    <property type="match status" value="1"/>
</dbReference>
<dbReference type="HAMAP" id="MF_00555">
    <property type="entry name" value="AsnA"/>
    <property type="match status" value="1"/>
</dbReference>
<dbReference type="InterPro" id="IPR006195">
    <property type="entry name" value="aa-tRNA-synth_II"/>
</dbReference>
<dbReference type="InterPro" id="IPR045864">
    <property type="entry name" value="aa-tRNA-synth_II/BPL/LPL"/>
</dbReference>
<dbReference type="InterPro" id="IPR004618">
    <property type="entry name" value="AsnA"/>
</dbReference>
<dbReference type="NCBIfam" id="TIGR00669">
    <property type="entry name" value="asnA"/>
    <property type="match status" value="1"/>
</dbReference>
<dbReference type="PANTHER" id="PTHR30073">
    <property type="entry name" value="ASPARTATE--AMMONIA LIGASE"/>
    <property type="match status" value="1"/>
</dbReference>
<dbReference type="PANTHER" id="PTHR30073:SF5">
    <property type="entry name" value="ASPARTATE--AMMONIA LIGASE"/>
    <property type="match status" value="1"/>
</dbReference>
<dbReference type="Pfam" id="PF03590">
    <property type="entry name" value="AsnA"/>
    <property type="match status" value="1"/>
</dbReference>
<dbReference type="PIRSF" id="PIRSF001555">
    <property type="entry name" value="Asp_ammon_ligase"/>
    <property type="match status" value="1"/>
</dbReference>
<dbReference type="SUPFAM" id="SSF55681">
    <property type="entry name" value="Class II aaRS and biotin synthetases"/>
    <property type="match status" value="1"/>
</dbReference>
<dbReference type="PROSITE" id="PS50862">
    <property type="entry name" value="AA_TRNA_LIGASE_II"/>
    <property type="match status" value="1"/>
</dbReference>
<evidence type="ECO:0000255" key="1">
    <source>
        <dbReference type="HAMAP-Rule" id="MF_00555"/>
    </source>
</evidence>
<comment type="catalytic activity">
    <reaction evidence="1">
        <text>L-aspartate + NH4(+) + ATP = L-asparagine + AMP + diphosphate + H(+)</text>
        <dbReference type="Rhea" id="RHEA:11372"/>
        <dbReference type="ChEBI" id="CHEBI:15378"/>
        <dbReference type="ChEBI" id="CHEBI:28938"/>
        <dbReference type="ChEBI" id="CHEBI:29991"/>
        <dbReference type="ChEBI" id="CHEBI:30616"/>
        <dbReference type="ChEBI" id="CHEBI:33019"/>
        <dbReference type="ChEBI" id="CHEBI:58048"/>
        <dbReference type="ChEBI" id="CHEBI:456215"/>
        <dbReference type="EC" id="6.3.1.1"/>
    </reaction>
</comment>
<comment type="pathway">
    <text evidence="1">Amino-acid biosynthesis; L-asparagine biosynthesis; L-asparagine from L-aspartate (ammonia route): step 1/1.</text>
</comment>
<comment type="subcellular location">
    <subcellularLocation>
        <location evidence="1">Cytoplasm</location>
    </subcellularLocation>
</comment>
<comment type="similarity">
    <text evidence="1">Belongs to the class-II aminoacyl-tRNA synthetase family. AsnA subfamily.</text>
</comment>
<keyword id="KW-0028">Amino-acid biosynthesis</keyword>
<keyword id="KW-0061">Asparagine biosynthesis</keyword>
<keyword id="KW-0067">ATP-binding</keyword>
<keyword id="KW-0963">Cytoplasm</keyword>
<keyword id="KW-0436">Ligase</keyword>
<keyword id="KW-0547">Nucleotide-binding</keyword>
<organism>
    <name type="scientific">Streptococcus pyogenes serotype M6 (strain ATCC BAA-946 / MGAS10394)</name>
    <dbReference type="NCBI Taxonomy" id="286636"/>
    <lineage>
        <taxon>Bacteria</taxon>
        <taxon>Bacillati</taxon>
        <taxon>Bacillota</taxon>
        <taxon>Bacilli</taxon>
        <taxon>Lactobacillales</taxon>
        <taxon>Streptococcaceae</taxon>
        <taxon>Streptococcus</taxon>
    </lineage>
</organism>
<sequence length="330" mass="37357">MKKSFIHQQEEISFVKNTFTQYLIAKLDVVEVQGPILSRVGDGMQDNLSGTENPVSVNVLKIPNATFEVVHSLAKWKRHTLARFGFNEGEGLVVNMKALRPDEDSLDQTHSVYVDQWDWEKVIPDGKRNLAYLKETVETIYKVIRLTELAVEARYDIEAVLPKKITFIHTEELVAKYPDLTPKERENAITKEFGAVFLIGIGGGLPDGKPHDGRAPDYDDWTTETENGYHGLNGDLLVWNDQLGSAFELSSMGIRVDEEALKRQVEMTGDQDRLAFDWHKSLLNGLFPLTIGGGIGQSRMVMFLLRKKHIGEVQTSVWPQEVRDSYDNIL</sequence>
<accession>Q5XAY8</accession>
<protein>
    <recommendedName>
        <fullName evidence="1">Aspartate--ammonia ligase</fullName>
        <ecNumber evidence="1">6.3.1.1</ecNumber>
    </recommendedName>
    <alternativeName>
        <fullName evidence="1">Asparagine synthetase A</fullName>
    </alternativeName>
</protein>
<gene>
    <name evidence="1" type="primary">asnA</name>
    <name type="ordered locus">M6_Spy1290</name>
</gene>
<proteinExistence type="inferred from homology"/>
<name>ASNA_STRP6</name>
<feature type="chain" id="PRO_0000195895" description="Aspartate--ammonia ligase">
    <location>
        <begin position="1"/>
        <end position="330"/>
    </location>
</feature>